<keyword id="KW-0963">Cytoplasm</keyword>
<keyword id="KW-0479">Metal-binding</keyword>
<keyword id="KW-0520">NAD</keyword>
<keyword id="KW-1185">Reference proteome</keyword>
<keyword id="KW-0808">Transferase</keyword>
<keyword id="KW-0862">Zinc</keyword>
<comment type="function">
    <text evidence="1">NAD-dependent protein deacetylase which modulates the activities of several enzymes which are inactive in their acetylated form.</text>
</comment>
<comment type="catalytic activity">
    <reaction evidence="1">
        <text>N(6)-acetyl-L-lysyl-[protein] + NAD(+) + H2O = 2''-O-acetyl-ADP-D-ribose + nicotinamide + L-lysyl-[protein]</text>
        <dbReference type="Rhea" id="RHEA:43636"/>
        <dbReference type="Rhea" id="RHEA-COMP:9752"/>
        <dbReference type="Rhea" id="RHEA-COMP:10731"/>
        <dbReference type="ChEBI" id="CHEBI:15377"/>
        <dbReference type="ChEBI" id="CHEBI:17154"/>
        <dbReference type="ChEBI" id="CHEBI:29969"/>
        <dbReference type="ChEBI" id="CHEBI:57540"/>
        <dbReference type="ChEBI" id="CHEBI:61930"/>
        <dbReference type="ChEBI" id="CHEBI:83767"/>
        <dbReference type="EC" id="2.3.1.286"/>
    </reaction>
</comment>
<comment type="cofactor">
    <cofactor evidence="1">
        <name>Zn(2+)</name>
        <dbReference type="ChEBI" id="CHEBI:29105"/>
    </cofactor>
    <text evidence="1">Binds 1 zinc ion per subunit.</text>
</comment>
<comment type="subcellular location">
    <subcellularLocation>
        <location evidence="1">Cytoplasm</location>
    </subcellularLocation>
</comment>
<comment type="similarity">
    <text evidence="1">Belongs to the sirtuin family. Class II subfamily.</text>
</comment>
<reference key="1">
    <citation type="journal article" date="2002" name="Nature">
        <title>Comparison of the genomes of two Xanthomonas pathogens with differing host specificities.</title>
        <authorList>
            <person name="da Silva A.C.R."/>
            <person name="Ferro J.A."/>
            <person name="Reinach F.C."/>
            <person name="Farah C.S."/>
            <person name="Furlan L.R."/>
            <person name="Quaggio R.B."/>
            <person name="Monteiro-Vitorello C.B."/>
            <person name="Van Sluys M.A."/>
            <person name="Almeida N.F. Jr."/>
            <person name="Alves L.M.C."/>
            <person name="do Amaral A.M."/>
            <person name="Bertolini M.C."/>
            <person name="Camargo L.E.A."/>
            <person name="Camarotte G."/>
            <person name="Cannavan F."/>
            <person name="Cardozo J."/>
            <person name="Chambergo F."/>
            <person name="Ciapina L.P."/>
            <person name="Cicarelli R.M.B."/>
            <person name="Coutinho L.L."/>
            <person name="Cursino-Santos J.R."/>
            <person name="El-Dorry H."/>
            <person name="Faria J.B."/>
            <person name="Ferreira A.J.S."/>
            <person name="Ferreira R.C.C."/>
            <person name="Ferro M.I.T."/>
            <person name="Formighieri E.F."/>
            <person name="Franco M.C."/>
            <person name="Greggio C.C."/>
            <person name="Gruber A."/>
            <person name="Katsuyama A.M."/>
            <person name="Kishi L.T."/>
            <person name="Leite R.P."/>
            <person name="Lemos E.G.M."/>
            <person name="Lemos M.V.F."/>
            <person name="Locali E.C."/>
            <person name="Machado M.A."/>
            <person name="Madeira A.M.B.N."/>
            <person name="Martinez-Rossi N.M."/>
            <person name="Martins E.C."/>
            <person name="Meidanis J."/>
            <person name="Menck C.F.M."/>
            <person name="Miyaki C.Y."/>
            <person name="Moon D.H."/>
            <person name="Moreira L.M."/>
            <person name="Novo M.T.M."/>
            <person name="Okura V.K."/>
            <person name="Oliveira M.C."/>
            <person name="Oliveira V.R."/>
            <person name="Pereira H.A."/>
            <person name="Rossi A."/>
            <person name="Sena J.A.D."/>
            <person name="Silva C."/>
            <person name="de Souza R.F."/>
            <person name="Spinola L.A.F."/>
            <person name="Takita M.A."/>
            <person name="Tamura R.E."/>
            <person name="Teixeira E.C."/>
            <person name="Tezza R.I.D."/>
            <person name="Trindade dos Santos M."/>
            <person name="Truffi D."/>
            <person name="Tsai S.M."/>
            <person name="White F.F."/>
            <person name="Setubal J.C."/>
            <person name="Kitajima J.P."/>
        </authorList>
    </citation>
    <scope>NUCLEOTIDE SEQUENCE [LARGE SCALE GENOMIC DNA]</scope>
    <source>
        <strain>ATCC 33913 / DSM 3586 / NCPPB 528 / LMG 568 / P 25</strain>
    </source>
</reference>
<feature type="chain" id="PRO_0000110373" description="NAD-dependent protein deacetylase">
    <location>
        <begin position="1"/>
        <end position="293"/>
    </location>
</feature>
<feature type="domain" description="Deacetylase sirtuin-type" evidence="2">
    <location>
        <begin position="1"/>
        <end position="284"/>
    </location>
</feature>
<feature type="active site" description="Proton acceptor" evidence="2">
    <location>
        <position position="123"/>
    </location>
</feature>
<feature type="binding site" evidence="1">
    <location>
        <begin position="27"/>
        <end position="47"/>
    </location>
    <ligand>
        <name>NAD(+)</name>
        <dbReference type="ChEBI" id="CHEBI:57540"/>
    </ligand>
</feature>
<feature type="binding site" evidence="1">
    <location>
        <begin position="105"/>
        <end position="108"/>
    </location>
    <ligand>
        <name>NAD(+)</name>
        <dbReference type="ChEBI" id="CHEBI:57540"/>
    </ligand>
</feature>
<feature type="binding site" evidence="1">
    <location>
        <position position="131"/>
    </location>
    <ligand>
        <name>Zn(2+)</name>
        <dbReference type="ChEBI" id="CHEBI:29105"/>
    </ligand>
</feature>
<feature type="binding site" evidence="1">
    <location>
        <position position="134"/>
    </location>
    <ligand>
        <name>Zn(2+)</name>
        <dbReference type="ChEBI" id="CHEBI:29105"/>
    </ligand>
</feature>
<feature type="binding site" evidence="1">
    <location>
        <position position="182"/>
    </location>
    <ligand>
        <name>Zn(2+)</name>
        <dbReference type="ChEBI" id="CHEBI:29105"/>
    </ligand>
</feature>
<feature type="binding site" evidence="1">
    <location>
        <position position="185"/>
    </location>
    <ligand>
        <name>Zn(2+)</name>
        <dbReference type="ChEBI" id="CHEBI:29105"/>
    </ligand>
</feature>
<feature type="binding site" evidence="1">
    <location>
        <begin position="222"/>
        <end position="224"/>
    </location>
    <ligand>
        <name>NAD(+)</name>
        <dbReference type="ChEBI" id="CHEBI:57540"/>
    </ligand>
</feature>
<feature type="binding site" evidence="1">
    <location>
        <begin position="248"/>
        <end position="250"/>
    </location>
    <ligand>
        <name>NAD(+)</name>
        <dbReference type="ChEBI" id="CHEBI:57540"/>
    </ligand>
</feature>
<feature type="binding site" evidence="1">
    <location>
        <position position="266"/>
    </location>
    <ligand>
        <name>NAD(+)</name>
        <dbReference type="ChEBI" id="CHEBI:57540"/>
    </ligand>
</feature>
<name>NPD_XANCP</name>
<sequence length="293" mass="32028">MTVAITQTGPALQEFVERHQRLFVLSGAGCSTDSGIPDYRDLQGGWKRPQPVTFQAFMGELSTRQRYWARSLVGWPRFGLARPNATHHALAALEARGQLELLLTQNVDRLHQAAGSQAVIDLHGRLDVVRCMGCEQRMPRTEFQLLLERDNPGWADLEAAQAPDGDADLDNVAFDNFVVPACPACGGVLKPDVVFFGENVPRERVERAFAHLQAADAVLVVGSSLMVYSGFRFVQAAARAGLPIAALNFGRTRADDLLSLKVEQSCAQALAFLQQPPDPLHTATARYHSARSA</sequence>
<protein>
    <recommendedName>
        <fullName evidence="1">NAD-dependent protein deacetylase</fullName>
        <ecNumber evidence="1 2">2.3.1.286</ecNumber>
    </recommendedName>
    <alternativeName>
        <fullName evidence="1">Regulatory protein SIR2 homolog</fullName>
    </alternativeName>
</protein>
<gene>
    <name evidence="1" type="primary">cobB</name>
    <name type="ordered locus">XCC0306</name>
</gene>
<evidence type="ECO:0000255" key="1">
    <source>
        <dbReference type="HAMAP-Rule" id="MF_01967"/>
    </source>
</evidence>
<evidence type="ECO:0000255" key="2">
    <source>
        <dbReference type="PROSITE-ProRule" id="PRU00236"/>
    </source>
</evidence>
<dbReference type="EC" id="2.3.1.286" evidence="1 2"/>
<dbReference type="EMBL" id="AE008922">
    <property type="protein sequence ID" value="AAM39625.1"/>
    <property type="molecule type" value="Genomic_DNA"/>
</dbReference>
<dbReference type="RefSeq" id="NP_635701.1">
    <property type="nucleotide sequence ID" value="NC_003902.1"/>
</dbReference>
<dbReference type="RefSeq" id="WP_011035561.1">
    <property type="nucleotide sequence ID" value="NC_003902.1"/>
</dbReference>
<dbReference type="SMR" id="Q8PDM9"/>
<dbReference type="STRING" id="190485.XCC0306"/>
<dbReference type="EnsemblBacteria" id="AAM39625">
    <property type="protein sequence ID" value="AAM39625"/>
    <property type="gene ID" value="XCC0306"/>
</dbReference>
<dbReference type="KEGG" id="xcc:XCC0306"/>
<dbReference type="PATRIC" id="fig|190485.4.peg.340"/>
<dbReference type="eggNOG" id="COG0846">
    <property type="taxonomic scope" value="Bacteria"/>
</dbReference>
<dbReference type="HOGENOM" id="CLU_023643_3_2_6"/>
<dbReference type="OrthoDB" id="9800582at2"/>
<dbReference type="Proteomes" id="UP000001010">
    <property type="component" value="Chromosome"/>
</dbReference>
<dbReference type="GO" id="GO:0005737">
    <property type="term" value="C:cytoplasm"/>
    <property type="evidence" value="ECO:0007669"/>
    <property type="project" value="UniProtKB-SubCell"/>
</dbReference>
<dbReference type="GO" id="GO:0017136">
    <property type="term" value="F:histone deacetylase activity, NAD-dependent"/>
    <property type="evidence" value="ECO:0000318"/>
    <property type="project" value="GO_Central"/>
</dbReference>
<dbReference type="GO" id="GO:0070403">
    <property type="term" value="F:NAD+ binding"/>
    <property type="evidence" value="ECO:0000318"/>
    <property type="project" value="GO_Central"/>
</dbReference>
<dbReference type="GO" id="GO:0008270">
    <property type="term" value="F:zinc ion binding"/>
    <property type="evidence" value="ECO:0007669"/>
    <property type="project" value="UniProtKB-UniRule"/>
</dbReference>
<dbReference type="CDD" id="cd01409">
    <property type="entry name" value="SIRT4"/>
    <property type="match status" value="1"/>
</dbReference>
<dbReference type="Gene3D" id="3.30.1600.10">
    <property type="entry name" value="SIR2/SIRT2 'Small Domain"/>
    <property type="match status" value="1"/>
</dbReference>
<dbReference type="Gene3D" id="3.40.50.1220">
    <property type="entry name" value="TPP-binding domain"/>
    <property type="match status" value="1"/>
</dbReference>
<dbReference type="HAMAP" id="MF_01967">
    <property type="entry name" value="Sirtuin_ClassII"/>
    <property type="match status" value="1"/>
</dbReference>
<dbReference type="InterPro" id="IPR029035">
    <property type="entry name" value="DHS-like_NAD/FAD-binding_dom"/>
</dbReference>
<dbReference type="InterPro" id="IPR050134">
    <property type="entry name" value="NAD-dep_sirtuin_deacylases"/>
</dbReference>
<dbReference type="InterPro" id="IPR003000">
    <property type="entry name" value="Sirtuin"/>
</dbReference>
<dbReference type="InterPro" id="IPR026591">
    <property type="entry name" value="Sirtuin_cat_small_dom_sf"/>
</dbReference>
<dbReference type="InterPro" id="IPR026587">
    <property type="entry name" value="Sirtuin_class_II"/>
</dbReference>
<dbReference type="InterPro" id="IPR026590">
    <property type="entry name" value="Ssirtuin_cat_dom"/>
</dbReference>
<dbReference type="NCBIfam" id="NF003738">
    <property type="entry name" value="PRK05333.1"/>
    <property type="match status" value="1"/>
</dbReference>
<dbReference type="PANTHER" id="PTHR11085">
    <property type="entry name" value="NAD-DEPENDENT PROTEIN DEACYLASE SIRTUIN-5, MITOCHONDRIAL-RELATED"/>
    <property type="match status" value="1"/>
</dbReference>
<dbReference type="PANTHER" id="PTHR11085:SF10">
    <property type="entry name" value="NAD-DEPENDENT PROTEIN DEACYLASE SIRTUIN-5, MITOCHONDRIAL-RELATED"/>
    <property type="match status" value="1"/>
</dbReference>
<dbReference type="Pfam" id="PF02146">
    <property type="entry name" value="SIR2"/>
    <property type="match status" value="1"/>
</dbReference>
<dbReference type="SUPFAM" id="SSF52467">
    <property type="entry name" value="DHS-like NAD/FAD-binding domain"/>
    <property type="match status" value="1"/>
</dbReference>
<dbReference type="PROSITE" id="PS50305">
    <property type="entry name" value="SIRTUIN"/>
    <property type="match status" value="1"/>
</dbReference>
<proteinExistence type="inferred from homology"/>
<accession>Q8PDM9</accession>
<organism>
    <name type="scientific">Xanthomonas campestris pv. campestris (strain ATCC 33913 / DSM 3586 / NCPPB 528 / LMG 568 / P 25)</name>
    <dbReference type="NCBI Taxonomy" id="190485"/>
    <lineage>
        <taxon>Bacteria</taxon>
        <taxon>Pseudomonadati</taxon>
        <taxon>Pseudomonadota</taxon>
        <taxon>Gammaproteobacteria</taxon>
        <taxon>Lysobacterales</taxon>
        <taxon>Lysobacteraceae</taxon>
        <taxon>Xanthomonas</taxon>
    </lineage>
</organism>